<accession>Q9JXF1</accession>
<dbReference type="EC" id="6.3.4.15"/>
<dbReference type="EC" id="2.7.1.33"/>
<dbReference type="EMBL" id="AE002098">
    <property type="protein sequence ID" value="AAF42394.1"/>
    <property type="molecule type" value="Genomic_DNA"/>
</dbReference>
<dbReference type="PIR" id="B81009">
    <property type="entry name" value="B81009"/>
</dbReference>
<dbReference type="RefSeq" id="NP_275065.1">
    <property type="nucleotide sequence ID" value="NC_003112.2"/>
</dbReference>
<dbReference type="RefSeq" id="WP_002225711.1">
    <property type="nucleotide sequence ID" value="NC_003112.2"/>
</dbReference>
<dbReference type="SMR" id="Q9JXF1"/>
<dbReference type="FunCoup" id="Q9JXF1">
    <property type="interactions" value="364"/>
</dbReference>
<dbReference type="STRING" id="122586.NMB2075"/>
<dbReference type="PaxDb" id="122586-NMB2075"/>
<dbReference type="KEGG" id="nme:NMB2075"/>
<dbReference type="PATRIC" id="fig|122586.8.peg.2655"/>
<dbReference type="HOGENOM" id="CLU_476347_0_0_4"/>
<dbReference type="InParanoid" id="Q9JXF1"/>
<dbReference type="OrthoDB" id="9807064at2"/>
<dbReference type="UniPathway" id="UPA00241">
    <property type="reaction ID" value="UER00352"/>
</dbReference>
<dbReference type="Proteomes" id="UP000000425">
    <property type="component" value="Chromosome"/>
</dbReference>
<dbReference type="GO" id="GO:0005737">
    <property type="term" value="C:cytoplasm"/>
    <property type="evidence" value="ECO:0000318"/>
    <property type="project" value="GO_Central"/>
</dbReference>
<dbReference type="GO" id="GO:0005524">
    <property type="term" value="F:ATP binding"/>
    <property type="evidence" value="ECO:0007669"/>
    <property type="project" value="UniProtKB-UniRule"/>
</dbReference>
<dbReference type="GO" id="GO:0004077">
    <property type="term" value="F:biotin--[biotin carboxyl-carrier protein] ligase activity"/>
    <property type="evidence" value="ECO:0000318"/>
    <property type="project" value="GO_Central"/>
</dbReference>
<dbReference type="GO" id="GO:0004594">
    <property type="term" value="F:pantothenate kinase activity"/>
    <property type="evidence" value="ECO:0007669"/>
    <property type="project" value="UniProtKB-UniRule"/>
</dbReference>
<dbReference type="GO" id="GO:0015937">
    <property type="term" value="P:coenzyme A biosynthetic process"/>
    <property type="evidence" value="ECO:0007669"/>
    <property type="project" value="UniProtKB-UniRule"/>
</dbReference>
<dbReference type="GO" id="GO:0036211">
    <property type="term" value="P:protein modification process"/>
    <property type="evidence" value="ECO:0007669"/>
    <property type="project" value="InterPro"/>
</dbReference>
<dbReference type="CDD" id="cd24015">
    <property type="entry name" value="ASKHA_NBD_PanK-III"/>
    <property type="match status" value="1"/>
</dbReference>
<dbReference type="CDD" id="cd16442">
    <property type="entry name" value="BPL"/>
    <property type="match status" value="1"/>
</dbReference>
<dbReference type="Gene3D" id="2.30.30.100">
    <property type="match status" value="1"/>
</dbReference>
<dbReference type="Gene3D" id="3.30.420.40">
    <property type="match status" value="2"/>
</dbReference>
<dbReference type="Gene3D" id="3.30.930.10">
    <property type="entry name" value="Bira Bifunctional Protein, Domain 2"/>
    <property type="match status" value="1"/>
</dbReference>
<dbReference type="HAMAP" id="MF_01274">
    <property type="entry name" value="Pantothen_kinase_3"/>
    <property type="match status" value="1"/>
</dbReference>
<dbReference type="InterPro" id="IPR045864">
    <property type="entry name" value="aa-tRNA-synth_II/BPL/LPL"/>
</dbReference>
<dbReference type="InterPro" id="IPR043129">
    <property type="entry name" value="ATPase_NBD"/>
</dbReference>
<dbReference type="InterPro" id="IPR004408">
    <property type="entry name" value="Biotin_CoA_COase_ligase"/>
</dbReference>
<dbReference type="InterPro" id="IPR003142">
    <property type="entry name" value="BPL_C"/>
</dbReference>
<dbReference type="InterPro" id="IPR004143">
    <property type="entry name" value="BPL_LPL_catalytic"/>
</dbReference>
<dbReference type="InterPro" id="IPR008988">
    <property type="entry name" value="Transcriptional_repressor_C"/>
</dbReference>
<dbReference type="InterPro" id="IPR004619">
    <property type="entry name" value="Type_III_PanK"/>
</dbReference>
<dbReference type="NCBIfam" id="TIGR00671">
    <property type="entry name" value="baf"/>
    <property type="match status" value="1"/>
</dbReference>
<dbReference type="NCBIfam" id="TIGR00121">
    <property type="entry name" value="birA_ligase"/>
    <property type="match status" value="1"/>
</dbReference>
<dbReference type="NCBIfam" id="NF009862">
    <property type="entry name" value="PRK13325.1"/>
    <property type="match status" value="1"/>
</dbReference>
<dbReference type="PANTHER" id="PTHR12835">
    <property type="entry name" value="BIOTIN PROTEIN LIGASE"/>
    <property type="match status" value="1"/>
</dbReference>
<dbReference type="PANTHER" id="PTHR12835:SF5">
    <property type="entry name" value="BIOTIN--PROTEIN LIGASE"/>
    <property type="match status" value="1"/>
</dbReference>
<dbReference type="Pfam" id="PF02237">
    <property type="entry name" value="BPL_C"/>
    <property type="match status" value="1"/>
</dbReference>
<dbReference type="Pfam" id="PF03099">
    <property type="entry name" value="BPL_LplA_LipB"/>
    <property type="match status" value="1"/>
</dbReference>
<dbReference type="Pfam" id="PF03309">
    <property type="entry name" value="Pan_kinase"/>
    <property type="match status" value="1"/>
</dbReference>
<dbReference type="SUPFAM" id="SSF53067">
    <property type="entry name" value="Actin-like ATPase domain"/>
    <property type="match status" value="2"/>
</dbReference>
<dbReference type="SUPFAM" id="SSF50037">
    <property type="entry name" value="C-terminal domain of transcriptional repressors"/>
    <property type="match status" value="1"/>
</dbReference>
<dbReference type="SUPFAM" id="SSF55681">
    <property type="entry name" value="Class II aaRS and biotin synthetases"/>
    <property type="match status" value="1"/>
</dbReference>
<dbReference type="PROSITE" id="PS51733">
    <property type="entry name" value="BPL_LPL_CATALYTIC"/>
    <property type="match status" value="1"/>
</dbReference>
<reference key="1">
    <citation type="journal article" date="2000" name="Science">
        <title>Complete genome sequence of Neisseria meningitidis serogroup B strain MC58.</title>
        <authorList>
            <person name="Tettelin H."/>
            <person name="Saunders N.J."/>
            <person name="Heidelberg J.F."/>
            <person name="Jeffries A.C."/>
            <person name="Nelson K.E."/>
            <person name="Eisen J.A."/>
            <person name="Ketchum K.A."/>
            <person name="Hood D.W."/>
            <person name="Peden J.F."/>
            <person name="Dodson R.J."/>
            <person name="Nelson W.C."/>
            <person name="Gwinn M.L."/>
            <person name="DeBoy R.T."/>
            <person name="Peterson J.D."/>
            <person name="Hickey E.K."/>
            <person name="Haft D.H."/>
            <person name="Salzberg S.L."/>
            <person name="White O."/>
            <person name="Fleischmann R.D."/>
            <person name="Dougherty B.A."/>
            <person name="Mason T.M."/>
            <person name="Ciecko A."/>
            <person name="Parksey D.S."/>
            <person name="Blair E."/>
            <person name="Cittone H."/>
            <person name="Clark E.B."/>
            <person name="Cotton M.D."/>
            <person name="Utterback T.R."/>
            <person name="Khouri H.M."/>
            <person name="Qin H."/>
            <person name="Vamathevan J.J."/>
            <person name="Gill J."/>
            <person name="Scarlato V."/>
            <person name="Masignani V."/>
            <person name="Pizza M."/>
            <person name="Grandi G."/>
            <person name="Sun L."/>
            <person name="Smith H.O."/>
            <person name="Fraser C.M."/>
            <person name="Moxon E.R."/>
            <person name="Rappuoli R."/>
            <person name="Venter J.C."/>
        </authorList>
    </citation>
    <scope>NUCLEOTIDE SEQUENCE [LARGE SCALE GENOMIC DNA]</scope>
    <source>
        <strain>ATCC BAA-335 / MC58</strain>
    </source>
</reference>
<sequence>MTVLKLSHWRVLAELADGLPQHVSQLARMADMKPQQLNGFWQQMPAHIRGLLRQHDGYWRLVRPLAVFDAEGLRELGERSGFQTALKHECASSNDEILELARIAPDKAHKTICVTHLQSKGRGRQGRKWSHRLGECLMFSFGWVFDRPQYELGSLSPVAAVACRRALSRLGLDVQIKWPNDLVVGRDKLGGILIETVRTGGKTVAVVGIGINFVLPKEVENAASVQSLFQTASRRGNADAAVLLETLLVELDAVLLQYARDGFAPFVAEYQAANRDHGKAVLLLRDGETVFEGTVKGVDGQGVLHLETAEGKQTVVSGEISLRSDDRPVSVPKRRDSERFLLLDGGNSRLKWAWVENGTFATVGSAPYRDLSPLGAEWAEKADGNVRIVGCAVCGEFKKAQVQEQLARKIEWLPSSAQALGIRNHYRHPEEHGSDRWFNALGSRRFSRNACVVVSCGTAVTVDALTDDGHYLGGTIMPGFHLMKESLAVRTANLNRHAGKRYPFPTTTGNAVASGMMDAVCGSVMMMHGRLKEKTGAGKPVDVIITGGGAAKVAEALPPAFLAENTVRVADNLVIYGLLNMIAAEGREYEHI</sequence>
<organism>
    <name type="scientific">Neisseria meningitidis serogroup B (strain ATCC BAA-335 / MC58)</name>
    <dbReference type="NCBI Taxonomy" id="122586"/>
    <lineage>
        <taxon>Bacteria</taxon>
        <taxon>Pseudomonadati</taxon>
        <taxon>Pseudomonadota</taxon>
        <taxon>Betaproteobacteria</taxon>
        <taxon>Neisseriales</taxon>
        <taxon>Neisseriaceae</taxon>
        <taxon>Neisseria</taxon>
    </lineage>
</organism>
<protein>
    <recommendedName>
        <fullName>Bifunctional enzyme BirA/CoaX</fullName>
    </recommendedName>
    <domain>
        <recommendedName>
            <fullName>Biotin--[acetyl-CoA-carboxylase] synthetase</fullName>
            <ecNumber>6.3.4.15</ecNumber>
        </recommendedName>
        <alternativeName>
            <fullName>Biotin--protein ligase</fullName>
        </alternativeName>
    </domain>
    <domain>
        <recommendedName>
            <fullName>Type III pantothenate kinase</fullName>
            <ecNumber>2.7.1.33</ecNumber>
        </recommendedName>
        <alternativeName>
            <fullName>PanK-III</fullName>
        </alternativeName>
        <alternativeName>
            <fullName>Pantothenic acid kinase</fullName>
        </alternativeName>
    </domain>
</protein>
<evidence type="ECO:0000250" key="1"/>
<evidence type="ECO:0000255" key="2"/>
<evidence type="ECO:0000255" key="3">
    <source>
        <dbReference type="PROSITE-ProRule" id="PRU01067"/>
    </source>
</evidence>
<evidence type="ECO:0000305" key="4"/>
<feature type="chain" id="PRO_0000270884" description="Bifunctional enzyme BirA/CoaX">
    <location>
        <begin position="1"/>
        <end position="592"/>
    </location>
</feature>
<feature type="domain" description="BPL/LPL catalytic" evidence="3">
    <location>
        <begin position="83"/>
        <end position="259"/>
    </location>
</feature>
<feature type="region of interest" description="Biotin--protein ligase">
    <location>
        <begin position="1"/>
        <end position="329"/>
    </location>
</feature>
<feature type="region of interest" description="Type III pantothenate kinase">
    <location>
        <begin position="336"/>
        <end position="592"/>
    </location>
</feature>
<feature type="active site" description="Proton acceptor" evidence="2">
    <location>
        <position position="435"/>
    </location>
</feature>
<feature type="binding site" evidence="1">
    <location>
        <begin position="344"/>
        <end position="351"/>
    </location>
    <ligand>
        <name>ATP</name>
        <dbReference type="ChEBI" id="CHEBI:30616"/>
    </ligand>
</feature>
<feature type="binding site" evidence="1">
    <location>
        <position position="426"/>
    </location>
    <ligand>
        <name>substrate</name>
    </ligand>
</feature>
<feature type="binding site" evidence="1">
    <location>
        <begin position="433"/>
        <end position="436"/>
    </location>
    <ligand>
        <name>substrate</name>
    </ligand>
</feature>
<feature type="binding site" evidence="2">
    <location>
        <position position="458"/>
    </location>
    <ligand>
        <name>ATP</name>
        <dbReference type="ChEBI" id="CHEBI:30616"/>
    </ligand>
</feature>
<feature type="binding site" evidence="1">
    <location>
        <position position="508"/>
    </location>
    <ligand>
        <name>substrate</name>
    </ligand>
</feature>
<keyword id="KW-0067">ATP-binding</keyword>
<keyword id="KW-0092">Biotin</keyword>
<keyword id="KW-0173">Coenzyme A biosynthesis</keyword>
<keyword id="KW-0963">Cytoplasm</keyword>
<keyword id="KW-0418">Kinase</keyword>
<keyword id="KW-0436">Ligase</keyword>
<keyword id="KW-0511">Multifunctional enzyme</keyword>
<keyword id="KW-0547">Nucleotide-binding</keyword>
<keyword id="KW-0630">Potassium</keyword>
<keyword id="KW-1185">Reference proteome</keyword>
<keyword id="KW-0808">Transferase</keyword>
<comment type="function">
    <text evidence="1">Activates biotin to form biotinyl-5'-adenylate and transfers the biotin moiety to biotin-accepting proteins.</text>
</comment>
<comment type="function">
    <text evidence="1">Catalyzes the phosphorylation of pantothenate (Pan), the first step in CoA biosynthesis.</text>
</comment>
<comment type="catalytic activity">
    <reaction>
        <text>biotin + L-lysyl-[protein] + ATP = N(6)-biotinyl-L-lysyl-[protein] + AMP + diphosphate + H(+)</text>
        <dbReference type="Rhea" id="RHEA:11756"/>
        <dbReference type="Rhea" id="RHEA-COMP:9752"/>
        <dbReference type="Rhea" id="RHEA-COMP:10505"/>
        <dbReference type="ChEBI" id="CHEBI:15378"/>
        <dbReference type="ChEBI" id="CHEBI:29969"/>
        <dbReference type="ChEBI" id="CHEBI:30616"/>
        <dbReference type="ChEBI" id="CHEBI:33019"/>
        <dbReference type="ChEBI" id="CHEBI:57586"/>
        <dbReference type="ChEBI" id="CHEBI:83144"/>
        <dbReference type="ChEBI" id="CHEBI:456215"/>
        <dbReference type="EC" id="6.3.4.15"/>
    </reaction>
</comment>
<comment type="catalytic activity">
    <reaction>
        <text>(R)-pantothenate + ATP = (R)-4'-phosphopantothenate + ADP + H(+)</text>
        <dbReference type="Rhea" id="RHEA:16373"/>
        <dbReference type="ChEBI" id="CHEBI:10986"/>
        <dbReference type="ChEBI" id="CHEBI:15378"/>
        <dbReference type="ChEBI" id="CHEBI:29032"/>
        <dbReference type="ChEBI" id="CHEBI:30616"/>
        <dbReference type="ChEBI" id="CHEBI:456216"/>
        <dbReference type="EC" id="2.7.1.33"/>
    </reaction>
</comment>
<comment type="cofactor">
    <cofactor evidence="1">
        <name>NH4(+)</name>
        <dbReference type="ChEBI" id="CHEBI:28938"/>
    </cofactor>
    <cofactor evidence="1">
        <name>K(+)</name>
        <dbReference type="ChEBI" id="CHEBI:29103"/>
    </cofactor>
    <text evidence="1">A monovalent cation. Ammonium or potassium.</text>
</comment>
<comment type="pathway">
    <text>Cofactor biosynthesis; coenzyme A biosynthesis; CoA from (R)-pantothenate: step 1/5.</text>
</comment>
<comment type="subcellular location">
    <subcellularLocation>
        <location evidence="4">Cytoplasm</location>
    </subcellularLocation>
</comment>
<comment type="similarity">
    <text evidence="4">In the N-terminal section; belongs to the biotin--protein ligase family.</text>
</comment>
<comment type="similarity">
    <text evidence="4">In the C-terminal section; belongs to the type III pantothenate kinase family.</text>
</comment>
<gene>
    <name type="primary">birA/coaX</name>
    <name type="ordered locus">NMB2075</name>
</gene>
<name>BICOA_NEIMB</name>
<proteinExistence type="inferred from homology"/>